<protein>
    <recommendedName>
        <fullName evidence="1">3-isopropylmalate dehydratase large subunit</fullName>
        <ecNumber evidence="1">4.2.1.33</ecNumber>
    </recommendedName>
    <alternativeName>
        <fullName evidence="1">Alpha-IPM isomerase</fullName>
        <shortName evidence="1">IPMI</shortName>
    </alternativeName>
    <alternativeName>
        <fullName evidence="1">Isopropylmalate isomerase</fullName>
    </alternativeName>
</protein>
<name>LEUC_DECAR</name>
<comment type="function">
    <text evidence="1">Catalyzes the isomerization between 2-isopropylmalate and 3-isopropylmalate, via the formation of 2-isopropylmaleate.</text>
</comment>
<comment type="catalytic activity">
    <reaction evidence="1">
        <text>(2R,3S)-3-isopropylmalate = (2S)-2-isopropylmalate</text>
        <dbReference type="Rhea" id="RHEA:32287"/>
        <dbReference type="ChEBI" id="CHEBI:1178"/>
        <dbReference type="ChEBI" id="CHEBI:35121"/>
        <dbReference type="EC" id="4.2.1.33"/>
    </reaction>
</comment>
<comment type="cofactor">
    <cofactor evidence="1">
        <name>[4Fe-4S] cluster</name>
        <dbReference type="ChEBI" id="CHEBI:49883"/>
    </cofactor>
    <text evidence="1">Binds 1 [4Fe-4S] cluster per subunit.</text>
</comment>
<comment type="pathway">
    <text evidence="1">Amino-acid biosynthesis; L-leucine biosynthesis; L-leucine from 3-methyl-2-oxobutanoate: step 2/4.</text>
</comment>
<comment type="subunit">
    <text evidence="1">Heterodimer of LeuC and LeuD.</text>
</comment>
<comment type="similarity">
    <text evidence="1">Belongs to the aconitase/IPM isomerase family. LeuC type 1 subfamily.</text>
</comment>
<evidence type="ECO:0000255" key="1">
    <source>
        <dbReference type="HAMAP-Rule" id="MF_01026"/>
    </source>
</evidence>
<gene>
    <name evidence="1" type="primary">leuC</name>
    <name type="ordered locus">Daro_0861</name>
</gene>
<reference key="1">
    <citation type="journal article" date="2009" name="BMC Genomics">
        <title>Metabolic analysis of the soil microbe Dechloromonas aromatica str. RCB: indications of a surprisingly complex life-style and cryptic anaerobic pathways for aromatic degradation.</title>
        <authorList>
            <person name="Salinero K.K."/>
            <person name="Keller K."/>
            <person name="Feil W.S."/>
            <person name="Feil H."/>
            <person name="Trong S."/>
            <person name="Di Bartolo G."/>
            <person name="Lapidus A."/>
        </authorList>
    </citation>
    <scope>NUCLEOTIDE SEQUENCE [LARGE SCALE GENOMIC DNA]</scope>
    <source>
        <strain>RCB</strain>
    </source>
</reference>
<keyword id="KW-0004">4Fe-4S</keyword>
<keyword id="KW-0028">Amino-acid biosynthesis</keyword>
<keyword id="KW-0100">Branched-chain amino acid biosynthesis</keyword>
<keyword id="KW-0408">Iron</keyword>
<keyword id="KW-0411">Iron-sulfur</keyword>
<keyword id="KW-0432">Leucine biosynthesis</keyword>
<keyword id="KW-0456">Lyase</keyword>
<keyword id="KW-0479">Metal-binding</keyword>
<feature type="chain" id="PRO_0000076743" description="3-isopropylmalate dehydratase large subunit">
    <location>
        <begin position="1"/>
        <end position="468"/>
    </location>
</feature>
<feature type="binding site" evidence="1">
    <location>
        <position position="348"/>
    </location>
    <ligand>
        <name>[4Fe-4S] cluster</name>
        <dbReference type="ChEBI" id="CHEBI:49883"/>
    </ligand>
</feature>
<feature type="binding site" evidence="1">
    <location>
        <position position="409"/>
    </location>
    <ligand>
        <name>[4Fe-4S] cluster</name>
        <dbReference type="ChEBI" id="CHEBI:49883"/>
    </ligand>
</feature>
<feature type="binding site" evidence="1">
    <location>
        <position position="412"/>
    </location>
    <ligand>
        <name>[4Fe-4S] cluster</name>
        <dbReference type="ChEBI" id="CHEBI:49883"/>
    </ligand>
</feature>
<dbReference type="EC" id="4.2.1.33" evidence="1"/>
<dbReference type="EMBL" id="CP000089">
    <property type="protein sequence ID" value="AAZ45617.1"/>
    <property type="molecule type" value="Genomic_DNA"/>
</dbReference>
<dbReference type="SMR" id="Q47HR4"/>
<dbReference type="STRING" id="159087.Daro_0861"/>
<dbReference type="KEGG" id="dar:Daro_0861"/>
<dbReference type="eggNOG" id="COG0065">
    <property type="taxonomic scope" value="Bacteria"/>
</dbReference>
<dbReference type="HOGENOM" id="CLU_006714_3_4_4"/>
<dbReference type="OrthoDB" id="9802769at2"/>
<dbReference type="UniPathway" id="UPA00048">
    <property type="reaction ID" value="UER00071"/>
</dbReference>
<dbReference type="GO" id="GO:0003861">
    <property type="term" value="F:3-isopropylmalate dehydratase activity"/>
    <property type="evidence" value="ECO:0007669"/>
    <property type="project" value="UniProtKB-UniRule"/>
</dbReference>
<dbReference type="GO" id="GO:0051539">
    <property type="term" value="F:4 iron, 4 sulfur cluster binding"/>
    <property type="evidence" value="ECO:0007669"/>
    <property type="project" value="UniProtKB-KW"/>
</dbReference>
<dbReference type="GO" id="GO:0046872">
    <property type="term" value="F:metal ion binding"/>
    <property type="evidence" value="ECO:0007669"/>
    <property type="project" value="UniProtKB-KW"/>
</dbReference>
<dbReference type="GO" id="GO:0009098">
    <property type="term" value="P:L-leucine biosynthetic process"/>
    <property type="evidence" value="ECO:0007669"/>
    <property type="project" value="UniProtKB-UniRule"/>
</dbReference>
<dbReference type="CDD" id="cd01583">
    <property type="entry name" value="IPMI"/>
    <property type="match status" value="1"/>
</dbReference>
<dbReference type="FunFam" id="3.30.499.10:FF:000007">
    <property type="entry name" value="3-isopropylmalate dehydratase large subunit"/>
    <property type="match status" value="1"/>
</dbReference>
<dbReference type="Gene3D" id="3.30.499.10">
    <property type="entry name" value="Aconitase, domain 3"/>
    <property type="match status" value="2"/>
</dbReference>
<dbReference type="HAMAP" id="MF_01026">
    <property type="entry name" value="LeuC_type1"/>
    <property type="match status" value="1"/>
</dbReference>
<dbReference type="InterPro" id="IPR004430">
    <property type="entry name" value="3-IsopropMal_deHydase_lsu"/>
</dbReference>
<dbReference type="InterPro" id="IPR015931">
    <property type="entry name" value="Acnase/IPM_dHydase_lsu_aba_1/3"/>
</dbReference>
<dbReference type="InterPro" id="IPR001030">
    <property type="entry name" value="Acoase/IPM_deHydtase_lsu_aba"/>
</dbReference>
<dbReference type="InterPro" id="IPR018136">
    <property type="entry name" value="Aconitase_4Fe-4S_BS"/>
</dbReference>
<dbReference type="InterPro" id="IPR036008">
    <property type="entry name" value="Aconitase_4Fe-4S_dom"/>
</dbReference>
<dbReference type="InterPro" id="IPR050067">
    <property type="entry name" value="IPM_dehydratase_rel_enz"/>
</dbReference>
<dbReference type="InterPro" id="IPR033941">
    <property type="entry name" value="IPMI_cat"/>
</dbReference>
<dbReference type="NCBIfam" id="TIGR00170">
    <property type="entry name" value="leuC"/>
    <property type="match status" value="1"/>
</dbReference>
<dbReference type="NCBIfam" id="NF004016">
    <property type="entry name" value="PRK05478.1"/>
    <property type="match status" value="1"/>
</dbReference>
<dbReference type="NCBIfam" id="NF009116">
    <property type="entry name" value="PRK12466.1"/>
    <property type="match status" value="1"/>
</dbReference>
<dbReference type="PANTHER" id="PTHR43822:SF9">
    <property type="entry name" value="3-ISOPROPYLMALATE DEHYDRATASE"/>
    <property type="match status" value="1"/>
</dbReference>
<dbReference type="PANTHER" id="PTHR43822">
    <property type="entry name" value="HOMOACONITASE, MITOCHONDRIAL-RELATED"/>
    <property type="match status" value="1"/>
</dbReference>
<dbReference type="Pfam" id="PF00330">
    <property type="entry name" value="Aconitase"/>
    <property type="match status" value="1"/>
</dbReference>
<dbReference type="PRINTS" id="PR00415">
    <property type="entry name" value="ACONITASE"/>
</dbReference>
<dbReference type="SUPFAM" id="SSF53732">
    <property type="entry name" value="Aconitase iron-sulfur domain"/>
    <property type="match status" value="1"/>
</dbReference>
<dbReference type="PROSITE" id="PS00450">
    <property type="entry name" value="ACONITASE_1"/>
    <property type="match status" value="1"/>
</dbReference>
<dbReference type="PROSITE" id="PS01244">
    <property type="entry name" value="ACONITASE_2"/>
    <property type="match status" value="1"/>
</dbReference>
<sequence>MSKTLYDKLWENHVVHQEADGTALLYIDRHLIHEVTSPQAFEGLKLAGRKPWRVSSIVATPDHNTPTDHWEEGIKDPISRQQVETLDANIREVGALAYFPFKDQRMGILHVVGPENGATLPGMTVVCGDSHTSTHGAFACMAHGIGTSEVEHVLATQCLLQKRSKTMLVAVEGKLGKGVTAKDVALAIIGTIGTAGGTGYAIEFGGSAIRGLSMEGRMTLCNMAIEGGARLGFVAVDDTTINYLKGRPFSPTGETWDRAVAYWRTLHSDAGAQFDRVVTLRAEDIRPQVTWGTSPEMVVSVDAVVPDPAKEADPVKREGMERALQYMGLNPNTPINQIAIDKVFIGSCTNSRIEDLREAASVLKGRHVAANVKLALAVPGSGLVKRQAEAEGLDKVFVAAGFEWREPGCSMCLAMNADRLEPGERCASTSNRNFEGRQGPGGRTHLVSPAMAAAAAIAGRFADVRDVL</sequence>
<organism>
    <name type="scientific">Dechloromonas aromatica (strain RCB)</name>
    <dbReference type="NCBI Taxonomy" id="159087"/>
    <lineage>
        <taxon>Bacteria</taxon>
        <taxon>Pseudomonadati</taxon>
        <taxon>Pseudomonadota</taxon>
        <taxon>Betaproteobacteria</taxon>
        <taxon>Rhodocyclales</taxon>
        <taxon>Azonexaceae</taxon>
        <taxon>Dechloromonas</taxon>
    </lineage>
</organism>
<proteinExistence type="inferred from homology"/>
<accession>Q47HR4</accession>